<dbReference type="EC" id="2.7.7.77" evidence="1"/>
<dbReference type="EMBL" id="CP000577">
    <property type="protein sequence ID" value="ABN77494.1"/>
    <property type="molecule type" value="Genomic_DNA"/>
</dbReference>
<dbReference type="RefSeq" id="WP_011841635.1">
    <property type="nucleotide sequence ID" value="NC_009049.1"/>
</dbReference>
<dbReference type="SMR" id="A3PMC8"/>
<dbReference type="GeneID" id="67447488"/>
<dbReference type="KEGG" id="rsh:Rsph17029_2392"/>
<dbReference type="HOGENOM" id="CLU_055597_5_0_5"/>
<dbReference type="GO" id="GO:0005737">
    <property type="term" value="C:cytoplasm"/>
    <property type="evidence" value="ECO:0007669"/>
    <property type="project" value="UniProtKB-SubCell"/>
</dbReference>
<dbReference type="GO" id="GO:0005525">
    <property type="term" value="F:GTP binding"/>
    <property type="evidence" value="ECO:0007669"/>
    <property type="project" value="UniProtKB-UniRule"/>
</dbReference>
<dbReference type="GO" id="GO:0046872">
    <property type="term" value="F:metal ion binding"/>
    <property type="evidence" value="ECO:0007669"/>
    <property type="project" value="UniProtKB-KW"/>
</dbReference>
<dbReference type="GO" id="GO:0061603">
    <property type="term" value="F:molybdenum cofactor guanylyltransferase activity"/>
    <property type="evidence" value="ECO:0007669"/>
    <property type="project" value="UniProtKB-EC"/>
</dbReference>
<dbReference type="GO" id="GO:1902758">
    <property type="term" value="P:bis(molybdopterin guanine dinucleotide)molybdenum biosynthetic process"/>
    <property type="evidence" value="ECO:0007669"/>
    <property type="project" value="TreeGrafter"/>
</dbReference>
<dbReference type="CDD" id="cd02503">
    <property type="entry name" value="MobA"/>
    <property type="match status" value="1"/>
</dbReference>
<dbReference type="Gene3D" id="3.90.550.10">
    <property type="entry name" value="Spore Coat Polysaccharide Biosynthesis Protein SpsA, Chain A"/>
    <property type="match status" value="1"/>
</dbReference>
<dbReference type="HAMAP" id="MF_00316">
    <property type="entry name" value="MobA"/>
    <property type="match status" value="1"/>
</dbReference>
<dbReference type="InterPro" id="IPR025877">
    <property type="entry name" value="MobA-like_NTP_Trfase"/>
</dbReference>
<dbReference type="InterPro" id="IPR013482">
    <property type="entry name" value="Molybde_CF_guanTrfase"/>
</dbReference>
<dbReference type="InterPro" id="IPR029044">
    <property type="entry name" value="Nucleotide-diphossugar_trans"/>
</dbReference>
<dbReference type="NCBIfam" id="TIGR02665">
    <property type="entry name" value="molyb_mobA"/>
    <property type="match status" value="1"/>
</dbReference>
<dbReference type="PANTHER" id="PTHR19136">
    <property type="entry name" value="MOLYBDENUM COFACTOR GUANYLYLTRANSFERASE"/>
    <property type="match status" value="1"/>
</dbReference>
<dbReference type="PANTHER" id="PTHR19136:SF81">
    <property type="entry name" value="MOLYBDENUM COFACTOR GUANYLYLTRANSFERASE"/>
    <property type="match status" value="1"/>
</dbReference>
<dbReference type="Pfam" id="PF12804">
    <property type="entry name" value="NTP_transf_3"/>
    <property type="match status" value="1"/>
</dbReference>
<dbReference type="SUPFAM" id="SSF53448">
    <property type="entry name" value="Nucleotide-diphospho-sugar transferases"/>
    <property type="match status" value="1"/>
</dbReference>
<organism>
    <name type="scientific">Cereibacter sphaeroides (strain ATCC 17029 / ATH 2.4.9)</name>
    <name type="common">Rhodobacter sphaeroides</name>
    <dbReference type="NCBI Taxonomy" id="349101"/>
    <lineage>
        <taxon>Bacteria</taxon>
        <taxon>Pseudomonadati</taxon>
        <taxon>Pseudomonadota</taxon>
        <taxon>Alphaproteobacteria</taxon>
        <taxon>Rhodobacterales</taxon>
        <taxon>Paracoccaceae</taxon>
        <taxon>Cereibacter</taxon>
    </lineage>
</organism>
<feature type="chain" id="PRO_1000019143" description="Molybdenum cofactor guanylyltransferase">
    <location>
        <begin position="1"/>
        <end position="193"/>
    </location>
</feature>
<feature type="binding site" evidence="1">
    <location>
        <begin position="8"/>
        <end position="10"/>
    </location>
    <ligand>
        <name>GTP</name>
        <dbReference type="ChEBI" id="CHEBI:37565"/>
    </ligand>
</feature>
<feature type="binding site" evidence="1">
    <location>
        <position position="21"/>
    </location>
    <ligand>
        <name>GTP</name>
        <dbReference type="ChEBI" id="CHEBI:37565"/>
    </ligand>
</feature>
<feature type="binding site" evidence="1">
    <location>
        <position position="67"/>
    </location>
    <ligand>
        <name>GTP</name>
        <dbReference type="ChEBI" id="CHEBI:37565"/>
    </ligand>
</feature>
<feature type="binding site" evidence="1">
    <location>
        <position position="98"/>
    </location>
    <ligand>
        <name>GTP</name>
        <dbReference type="ChEBI" id="CHEBI:37565"/>
    </ligand>
</feature>
<feature type="binding site" evidence="1">
    <location>
        <position position="98"/>
    </location>
    <ligand>
        <name>Mg(2+)</name>
        <dbReference type="ChEBI" id="CHEBI:18420"/>
    </ligand>
</feature>
<protein>
    <recommendedName>
        <fullName evidence="1">Molybdenum cofactor guanylyltransferase</fullName>
        <shortName evidence="1">MoCo guanylyltransferase</shortName>
        <ecNumber evidence="1">2.7.7.77</ecNumber>
    </recommendedName>
    <alternativeName>
        <fullName evidence="1">GTP:molybdopterin guanylyltransferase</fullName>
    </alternativeName>
    <alternativeName>
        <fullName evidence="1">Mo-MPT guanylyltransferase</fullName>
    </alternativeName>
    <alternativeName>
        <fullName evidence="1">Molybdopterin guanylyltransferase</fullName>
    </alternativeName>
    <alternativeName>
        <fullName evidence="1">Molybdopterin-guanine dinucleotide synthase</fullName>
        <shortName evidence="1">MGD synthase</shortName>
    </alternativeName>
</protein>
<evidence type="ECO:0000255" key="1">
    <source>
        <dbReference type="HAMAP-Rule" id="MF_00316"/>
    </source>
</evidence>
<name>MOBA_CERS1</name>
<reference key="1">
    <citation type="submission" date="2007-02" db="EMBL/GenBank/DDBJ databases">
        <title>Complete sequence of chromosome 1 of Rhodobacter sphaeroides ATCC 17029.</title>
        <authorList>
            <person name="Copeland A."/>
            <person name="Lucas S."/>
            <person name="Lapidus A."/>
            <person name="Barry K."/>
            <person name="Detter J.C."/>
            <person name="Glavina del Rio T."/>
            <person name="Hammon N."/>
            <person name="Israni S."/>
            <person name="Dalin E."/>
            <person name="Tice H."/>
            <person name="Pitluck S."/>
            <person name="Kiss H."/>
            <person name="Brettin T."/>
            <person name="Bruce D."/>
            <person name="Han C."/>
            <person name="Tapia R."/>
            <person name="Gilna P."/>
            <person name="Schmutz J."/>
            <person name="Larimer F."/>
            <person name="Land M."/>
            <person name="Hauser L."/>
            <person name="Kyrpides N."/>
            <person name="Mikhailova N."/>
            <person name="Richardson P."/>
            <person name="Mackenzie C."/>
            <person name="Choudhary M."/>
            <person name="Donohue T.J."/>
            <person name="Kaplan S."/>
        </authorList>
    </citation>
    <scope>NUCLEOTIDE SEQUENCE [LARGE SCALE GENOMIC DNA]</scope>
    <source>
        <strain>ATCC 17029 / ATH 2.4.9</strain>
    </source>
</reference>
<comment type="function">
    <text evidence="1">Transfers a GMP moiety from GTP to Mo-molybdopterin (Mo-MPT) cofactor (Moco or molybdenum cofactor) to form Mo-molybdopterin guanine dinucleotide (Mo-MGD) cofactor.</text>
</comment>
<comment type="catalytic activity">
    <reaction evidence="1">
        <text>Mo-molybdopterin + GTP + H(+) = Mo-molybdopterin guanine dinucleotide + diphosphate</text>
        <dbReference type="Rhea" id="RHEA:34243"/>
        <dbReference type="ChEBI" id="CHEBI:15378"/>
        <dbReference type="ChEBI" id="CHEBI:33019"/>
        <dbReference type="ChEBI" id="CHEBI:37565"/>
        <dbReference type="ChEBI" id="CHEBI:71302"/>
        <dbReference type="ChEBI" id="CHEBI:71310"/>
        <dbReference type="EC" id="2.7.7.77"/>
    </reaction>
</comment>
<comment type="cofactor">
    <cofactor evidence="1">
        <name>Mg(2+)</name>
        <dbReference type="ChEBI" id="CHEBI:18420"/>
    </cofactor>
</comment>
<comment type="subunit">
    <text evidence="1">Monomer.</text>
</comment>
<comment type="subcellular location">
    <subcellularLocation>
        <location evidence="1">Cytoplasm</location>
    </subcellularLocation>
</comment>
<comment type="domain">
    <text evidence="1">The N-terminal domain determines nucleotide recognition and specific binding, while the C-terminal domain determines the specific binding to the target protein.</text>
</comment>
<comment type="similarity">
    <text evidence="1">Belongs to the MobA family.</text>
</comment>
<sequence>MRLFGLILAGGEGRRMGGTDKASLTLGGRLLVTWVAERLGPQVEELAISANGDPARFAGLGLPVLRDEHPQGPLSGVLAGLRWAAAAGADALVTAPVDTPFVPGDLAPRLWLAGEGACAVAEAGGRVHPACGLWPVAVAEDLAAWLAAGEARVMGFAARHGAARAGFPDENAFLNLNAPEDLARAESLLRKDA</sequence>
<keyword id="KW-0963">Cytoplasm</keyword>
<keyword id="KW-0342">GTP-binding</keyword>
<keyword id="KW-0460">Magnesium</keyword>
<keyword id="KW-0479">Metal-binding</keyword>
<keyword id="KW-0501">Molybdenum cofactor biosynthesis</keyword>
<keyword id="KW-0547">Nucleotide-binding</keyword>
<keyword id="KW-0808">Transferase</keyword>
<accession>A3PMC8</accession>
<gene>
    <name evidence="1" type="primary">mobA</name>
    <name type="ordered locus">Rsph17029_2392</name>
</gene>
<proteinExistence type="inferred from homology"/>